<comment type="function">
    <text evidence="2">Thiol-specific peroxidase that catalyzes the reduction of hydrogen peroxide and organic hydroperoxides to water and alcohols, respectively. Plays a role in cell protection against oxidative stress by detoxifying peroxides.</text>
</comment>
<comment type="catalytic activity">
    <reaction evidence="2">
        <text>a hydroperoxide + [thioredoxin]-dithiol = an alcohol + [thioredoxin]-disulfide + H2O</text>
        <dbReference type="Rhea" id="RHEA:62620"/>
        <dbReference type="Rhea" id="RHEA-COMP:10698"/>
        <dbReference type="Rhea" id="RHEA-COMP:10700"/>
        <dbReference type="ChEBI" id="CHEBI:15377"/>
        <dbReference type="ChEBI" id="CHEBI:29950"/>
        <dbReference type="ChEBI" id="CHEBI:30879"/>
        <dbReference type="ChEBI" id="CHEBI:35924"/>
        <dbReference type="ChEBI" id="CHEBI:50058"/>
        <dbReference type="EC" id="1.11.1.24"/>
    </reaction>
</comment>
<comment type="subunit">
    <text evidence="2">Homodimer; disulfide-linked, upon oxidation.</text>
</comment>
<comment type="subcellular location">
    <subcellularLocation>
        <location evidence="4">Plastid</location>
        <location evidence="4">Chloroplast</location>
    </subcellularLocation>
</comment>
<comment type="PTM">
    <text evidence="1">The Cys-53-SH group is the primary site of oxidation by H(2)O(2), and the oxidized Cys-53 (probably Cys-SOH) rapidly reacts with Cys-174-SH of the other subunit to form an intermolecular disulfide. This disulfide is subsequently reduced by thioredoxin (By similarity).</text>
</comment>
<comment type="miscellaneous">
    <text evidence="2">The active site is a conserved redox-active cysteine residue, the peroxidatic cysteine (C(P)), which makes the nucleophilic attack on the peroxide substrate. The peroxide oxidizes the C(P)-SH to cysteine sulfenic acid (C(P)-SOH), which then reacts with another cysteine residue, the resolving cysteine (C(R)), to form a disulfide bridge. The disulfide is subsequently reduced by an appropriate electron donor to complete the catalytic cycle. In this typical 2-Cys peroxiredoxin, C(R) is provided by the other dimeric subunit to form an intersubunit disulfide. The disulfide is subsequently reduced by thioredoxin.</text>
</comment>
<comment type="similarity">
    <text evidence="4">Belongs to the peroxiredoxin family. AhpC/Prx1 subfamily.</text>
</comment>
<evidence type="ECO:0000250" key="1"/>
<evidence type="ECO:0000250" key="2">
    <source>
        <dbReference type="UniProtKB" id="Q06830"/>
    </source>
</evidence>
<evidence type="ECO:0000255" key="3">
    <source>
        <dbReference type="PROSITE-ProRule" id="PRU00691"/>
    </source>
</evidence>
<evidence type="ECO:0000305" key="4"/>
<organism>
    <name type="scientific">Porphyra purpurea</name>
    <name type="common">Red seaweed</name>
    <name type="synonym">Ulva purpurea</name>
    <dbReference type="NCBI Taxonomy" id="2787"/>
    <lineage>
        <taxon>Eukaryota</taxon>
        <taxon>Rhodophyta</taxon>
        <taxon>Bangiophyceae</taxon>
        <taxon>Bangiales</taxon>
        <taxon>Bangiaceae</taxon>
        <taxon>Porphyra</taxon>
    </lineage>
</organism>
<protein>
    <recommendedName>
        <fullName>Putative peroxiredoxin ycf42</fullName>
        <ecNumber evidence="2">1.11.1.24</ecNumber>
    </recommendedName>
    <alternativeName>
        <fullName>Thioredoxin peroxidase</fullName>
    </alternativeName>
</protein>
<geneLocation type="chloroplast"/>
<name>YCF42_PORPU</name>
<proteinExistence type="inferred from homology"/>
<gene>
    <name type="primary">ycf42</name>
</gene>
<sequence>MISGHNCLQVGQIAPDFSATAVYDQEFKTIKLSDFKNKYVILFFYPLDFTFVCPTEITAFSDKYSDFSELNTEILGVSVDSEYSHLAWLQTDRESGGLGDLEYPLVSDLKKEISIAYNVLNSGGVALRGLFIIDPKGIIQYSTVNNLEFGRSVEETLRVLQAIQYVQAHPDEVCPANWKPGDRTMNPDPIKSKNYFAAA</sequence>
<reference key="1">
    <citation type="journal article" date="1995" name="Plant Mol. Biol. Rep.">
        <title>Complete nucleotide sequence of the Porphyra purpurea chloroplast genome.</title>
        <authorList>
            <person name="Reith M.E."/>
            <person name="Munholland J."/>
        </authorList>
    </citation>
    <scope>NUCLEOTIDE SEQUENCE [LARGE SCALE GENOMIC DNA]</scope>
    <source>
        <strain>Avonport</strain>
    </source>
</reference>
<accession>P51272</accession>
<feature type="chain" id="PRO_0000135147" description="Putative peroxiredoxin ycf42">
    <location>
        <begin position="1"/>
        <end position="199"/>
    </location>
</feature>
<feature type="domain" description="Thioredoxin" evidence="3">
    <location>
        <begin position="8"/>
        <end position="165"/>
    </location>
</feature>
<feature type="active site" description="Cysteine sulfenic acid (-SOH) intermediate" evidence="2">
    <location>
        <position position="53"/>
    </location>
</feature>
<feature type="disulfide bond" description="Interchain (with C-174); in linked form" evidence="2">
    <location>
        <position position="53"/>
    </location>
</feature>
<feature type="disulfide bond" description="Interchain (with C-53); in linked form" evidence="2">
    <location>
        <position position="174"/>
    </location>
</feature>
<dbReference type="EC" id="1.11.1.24" evidence="2"/>
<dbReference type="EMBL" id="U38804">
    <property type="protein sequence ID" value="AAC08158.1"/>
    <property type="molecule type" value="Genomic_DNA"/>
</dbReference>
<dbReference type="PIR" id="S73193">
    <property type="entry name" value="S73193"/>
</dbReference>
<dbReference type="SMR" id="P51272"/>
<dbReference type="GO" id="GO:0009507">
    <property type="term" value="C:chloroplast"/>
    <property type="evidence" value="ECO:0007669"/>
    <property type="project" value="UniProtKB-SubCell"/>
</dbReference>
<dbReference type="GO" id="GO:0008379">
    <property type="term" value="F:thioredoxin peroxidase activity"/>
    <property type="evidence" value="ECO:0007669"/>
    <property type="project" value="TreeGrafter"/>
</dbReference>
<dbReference type="GO" id="GO:0045454">
    <property type="term" value="P:cell redox homeostasis"/>
    <property type="evidence" value="ECO:0007669"/>
    <property type="project" value="TreeGrafter"/>
</dbReference>
<dbReference type="GO" id="GO:0033554">
    <property type="term" value="P:cellular response to stress"/>
    <property type="evidence" value="ECO:0007669"/>
    <property type="project" value="TreeGrafter"/>
</dbReference>
<dbReference type="GO" id="GO:0042744">
    <property type="term" value="P:hydrogen peroxide catabolic process"/>
    <property type="evidence" value="ECO:0007669"/>
    <property type="project" value="TreeGrafter"/>
</dbReference>
<dbReference type="GO" id="GO:0006979">
    <property type="term" value="P:response to oxidative stress"/>
    <property type="evidence" value="ECO:0007669"/>
    <property type="project" value="TreeGrafter"/>
</dbReference>
<dbReference type="CDD" id="cd03015">
    <property type="entry name" value="PRX_Typ2cys"/>
    <property type="match status" value="1"/>
</dbReference>
<dbReference type="FunFam" id="3.40.30.10:FF:000063">
    <property type="entry name" value="2-Cys peroxiredoxin BAS1, chloroplastic"/>
    <property type="match status" value="1"/>
</dbReference>
<dbReference type="Gene3D" id="3.40.30.10">
    <property type="entry name" value="Glutaredoxin"/>
    <property type="match status" value="1"/>
</dbReference>
<dbReference type="InterPro" id="IPR000866">
    <property type="entry name" value="AhpC/TSA"/>
</dbReference>
<dbReference type="InterPro" id="IPR050217">
    <property type="entry name" value="Peroxiredoxin"/>
</dbReference>
<dbReference type="InterPro" id="IPR024706">
    <property type="entry name" value="Peroxiredoxin_AhpC-typ"/>
</dbReference>
<dbReference type="InterPro" id="IPR019479">
    <property type="entry name" value="Peroxiredoxin_C"/>
</dbReference>
<dbReference type="InterPro" id="IPR036249">
    <property type="entry name" value="Thioredoxin-like_sf"/>
</dbReference>
<dbReference type="InterPro" id="IPR013766">
    <property type="entry name" value="Thioredoxin_domain"/>
</dbReference>
<dbReference type="PANTHER" id="PTHR10681">
    <property type="entry name" value="THIOREDOXIN PEROXIDASE"/>
    <property type="match status" value="1"/>
</dbReference>
<dbReference type="PANTHER" id="PTHR10681:SF128">
    <property type="entry name" value="THIOREDOXIN-DEPENDENT PEROXIDE REDUCTASE, MITOCHONDRIAL"/>
    <property type="match status" value="1"/>
</dbReference>
<dbReference type="Pfam" id="PF10417">
    <property type="entry name" value="1-cysPrx_C"/>
    <property type="match status" value="1"/>
</dbReference>
<dbReference type="Pfam" id="PF00578">
    <property type="entry name" value="AhpC-TSA"/>
    <property type="match status" value="1"/>
</dbReference>
<dbReference type="PIRSF" id="PIRSF000239">
    <property type="entry name" value="AHPC"/>
    <property type="match status" value="1"/>
</dbReference>
<dbReference type="SUPFAM" id="SSF52833">
    <property type="entry name" value="Thioredoxin-like"/>
    <property type="match status" value="1"/>
</dbReference>
<dbReference type="PROSITE" id="PS51352">
    <property type="entry name" value="THIOREDOXIN_2"/>
    <property type="match status" value="1"/>
</dbReference>
<keyword id="KW-0049">Antioxidant</keyword>
<keyword id="KW-0150">Chloroplast</keyword>
<keyword id="KW-1015">Disulfide bond</keyword>
<keyword id="KW-0560">Oxidoreductase</keyword>
<keyword id="KW-0575">Peroxidase</keyword>
<keyword id="KW-0934">Plastid</keyword>
<keyword id="KW-0676">Redox-active center</keyword>